<feature type="chain" id="PRO_1000020431" description="Threonine--tRNA ligase">
    <location>
        <begin position="1"/>
        <end position="622"/>
    </location>
</feature>
<feature type="region of interest" description="Editing domain" evidence="1">
    <location>
        <begin position="1"/>
        <end position="141"/>
    </location>
</feature>
<feature type="region of interest" description="Catalytic" evidence="1">
    <location>
        <begin position="199"/>
        <end position="498"/>
    </location>
</feature>
<feature type="binding site" evidence="1">
    <location>
        <position position="291"/>
    </location>
    <ligand>
        <name>Zn(2+)</name>
        <dbReference type="ChEBI" id="CHEBI:29105"/>
    </ligand>
</feature>
<feature type="binding site" evidence="1">
    <location>
        <position position="343"/>
    </location>
    <ligand>
        <name>Zn(2+)</name>
        <dbReference type="ChEBI" id="CHEBI:29105"/>
    </ligand>
</feature>
<feature type="binding site" evidence="1">
    <location>
        <position position="467"/>
    </location>
    <ligand>
        <name>Zn(2+)</name>
        <dbReference type="ChEBI" id="CHEBI:29105"/>
    </ligand>
</feature>
<protein>
    <recommendedName>
        <fullName evidence="1">Threonine--tRNA ligase</fullName>
        <ecNumber evidence="1">6.1.1.3</ecNumber>
    </recommendedName>
    <alternativeName>
        <fullName evidence="1">Threonyl-tRNA synthetase</fullName>
        <shortName evidence="1">ThrRS</shortName>
    </alternativeName>
</protein>
<proteinExistence type="inferred from homology"/>
<comment type="function">
    <text evidence="1">Catalyzes the attachment of threonine to tRNA(Thr) in a two-step reaction: L-threonine is first activated by ATP to form Thr-AMP and then transferred to the acceptor end of tRNA(Thr). Also edits incorrectly charged L-seryl-tRNA(Thr).</text>
</comment>
<comment type="catalytic activity">
    <reaction evidence="1">
        <text>tRNA(Thr) + L-threonine + ATP = L-threonyl-tRNA(Thr) + AMP + diphosphate + H(+)</text>
        <dbReference type="Rhea" id="RHEA:24624"/>
        <dbReference type="Rhea" id="RHEA-COMP:9670"/>
        <dbReference type="Rhea" id="RHEA-COMP:9704"/>
        <dbReference type="ChEBI" id="CHEBI:15378"/>
        <dbReference type="ChEBI" id="CHEBI:30616"/>
        <dbReference type="ChEBI" id="CHEBI:33019"/>
        <dbReference type="ChEBI" id="CHEBI:57926"/>
        <dbReference type="ChEBI" id="CHEBI:78442"/>
        <dbReference type="ChEBI" id="CHEBI:78534"/>
        <dbReference type="ChEBI" id="CHEBI:456215"/>
        <dbReference type="EC" id="6.1.1.3"/>
    </reaction>
</comment>
<comment type="cofactor">
    <cofactor evidence="1">
        <name>Zn(2+)</name>
        <dbReference type="ChEBI" id="CHEBI:29105"/>
    </cofactor>
    <text evidence="1">Binds 1 zinc ion per subunit.</text>
</comment>
<comment type="subunit">
    <text evidence="1">Homodimer.</text>
</comment>
<comment type="subcellular location">
    <subcellularLocation>
        <location evidence="1">Cytoplasm</location>
    </subcellularLocation>
</comment>
<comment type="domain">
    <text evidence="1">The N-terminal domain is an archaea-specific tRNA-editing domain that hydrolyzes incorrectly charged L-seryl-tRNA(Thr). Catalysis of tRNA editing is performed by the charged tRNA itself.</text>
</comment>
<comment type="similarity">
    <text evidence="1">Belongs to the class-II aminoacyl-tRNA synthetase family.</text>
</comment>
<sequence>MKTLLIHSDYLEFEAKEKTKIAEDADVLSGKMDECLTVFIAVEKDDESDPDAVVKNAVEEIVKTADNLKVKNVVVYPYAHLSSDLGSPATAKEILAEIEKELSGNYEVLRAPFGWYKAFKISCKGHPLSELSRKITTERKEEVKKEKIVSKFYIINGENLELTEVNDEIISKMEDKGLLALLKHELDIKEEGTEKGEPPHVKYIKEKEICDYEPSSDAGHFRWYPKGKLIRDLLSDYVYNLVVERGGMPVETPVMYDLQNNAIREHADKFGERQYRFKQGNKDLMLRFAACFGQFMMKKDMYLLPKHMPLKLYELSTYSFRYEQRGELVGLKRLRAFTMPDMHTVCIDMKQAMEAFEDQLWMGLKTGDDFKTPYAIIFRFTEDFFEENKDWFFGMAKEYKQKYGKDAILEILPGRKHYWVGKVDMAVVDSFGRPIENPTVQIDVESAERFGIVVHDGDKKVHPIILHCSPTGSVERVLCGLLENAYLNTLENKPPALPTWLTPIQARVIPVGDKHEEFALEVANKLRASGIRADFDDREDSMGKKVRNAGTDWVNYVVVIGDNEMETGKLTVTIREESELKKAKKEALTVEELIEKITSDVKDAPKRPLPLPMKCSVQPIFR</sequence>
<keyword id="KW-0030">Aminoacyl-tRNA synthetase</keyword>
<keyword id="KW-0067">ATP-binding</keyword>
<keyword id="KW-0963">Cytoplasm</keyword>
<keyword id="KW-0436">Ligase</keyword>
<keyword id="KW-0479">Metal-binding</keyword>
<keyword id="KW-0547">Nucleotide-binding</keyword>
<keyword id="KW-0648">Protein biosynthesis</keyword>
<keyword id="KW-0694">RNA-binding</keyword>
<keyword id="KW-0820">tRNA-binding</keyword>
<keyword id="KW-0862">Zinc</keyword>
<accession>A6VJ50</accession>
<organism>
    <name type="scientific">Methanococcus maripaludis (strain C7 / ATCC BAA-1331)</name>
    <dbReference type="NCBI Taxonomy" id="426368"/>
    <lineage>
        <taxon>Archaea</taxon>
        <taxon>Methanobacteriati</taxon>
        <taxon>Methanobacteriota</taxon>
        <taxon>Methanomada group</taxon>
        <taxon>Methanococci</taxon>
        <taxon>Methanococcales</taxon>
        <taxon>Methanococcaceae</taxon>
        <taxon>Methanococcus</taxon>
    </lineage>
</organism>
<name>SYT_METM7</name>
<dbReference type="EC" id="6.1.1.3" evidence="1"/>
<dbReference type="EMBL" id="CP000745">
    <property type="protein sequence ID" value="ABR66476.1"/>
    <property type="molecule type" value="Genomic_DNA"/>
</dbReference>
<dbReference type="SMR" id="A6VJ50"/>
<dbReference type="STRING" id="426368.MmarC7_1413"/>
<dbReference type="KEGG" id="mmz:MmarC7_1413"/>
<dbReference type="eggNOG" id="arCOG00401">
    <property type="taxonomic scope" value="Archaea"/>
</dbReference>
<dbReference type="HOGENOM" id="CLU_029833_0_0_2"/>
<dbReference type="OrthoDB" id="372136at2157"/>
<dbReference type="GO" id="GO:0005737">
    <property type="term" value="C:cytoplasm"/>
    <property type="evidence" value="ECO:0007669"/>
    <property type="project" value="UniProtKB-SubCell"/>
</dbReference>
<dbReference type="GO" id="GO:0005524">
    <property type="term" value="F:ATP binding"/>
    <property type="evidence" value="ECO:0007669"/>
    <property type="project" value="UniProtKB-UniRule"/>
</dbReference>
<dbReference type="GO" id="GO:0004829">
    <property type="term" value="F:threonine-tRNA ligase activity"/>
    <property type="evidence" value="ECO:0007669"/>
    <property type="project" value="UniProtKB-UniRule"/>
</dbReference>
<dbReference type="GO" id="GO:0000049">
    <property type="term" value="F:tRNA binding"/>
    <property type="evidence" value="ECO:0007669"/>
    <property type="project" value="UniProtKB-KW"/>
</dbReference>
<dbReference type="GO" id="GO:0008270">
    <property type="term" value="F:zinc ion binding"/>
    <property type="evidence" value="ECO:0007669"/>
    <property type="project" value="InterPro"/>
</dbReference>
<dbReference type="GO" id="GO:0006435">
    <property type="term" value="P:threonyl-tRNA aminoacylation"/>
    <property type="evidence" value="ECO:0007669"/>
    <property type="project" value="UniProtKB-UniRule"/>
</dbReference>
<dbReference type="CDD" id="cd00860">
    <property type="entry name" value="ThrRS_anticodon"/>
    <property type="match status" value="1"/>
</dbReference>
<dbReference type="FunFam" id="3.40.50.800:FF:000001">
    <property type="entry name" value="Threonine--tRNA ligase"/>
    <property type="match status" value="1"/>
</dbReference>
<dbReference type="FunFam" id="3.50.80.10:FF:000004">
    <property type="entry name" value="Threonine--tRNA ligase"/>
    <property type="match status" value="1"/>
</dbReference>
<dbReference type="Gene3D" id="3.40.50.800">
    <property type="entry name" value="Anticodon-binding domain"/>
    <property type="match status" value="1"/>
</dbReference>
<dbReference type="Gene3D" id="3.30.930.10">
    <property type="entry name" value="Bira Bifunctional Protein, Domain 2"/>
    <property type="match status" value="1"/>
</dbReference>
<dbReference type="Gene3D" id="3.50.80.10">
    <property type="entry name" value="D-tyrosyl-tRNA(Tyr) deacylase"/>
    <property type="match status" value="1"/>
</dbReference>
<dbReference type="HAMAP" id="MF_00184">
    <property type="entry name" value="Thr_tRNA_synth"/>
    <property type="match status" value="1"/>
</dbReference>
<dbReference type="InterPro" id="IPR002314">
    <property type="entry name" value="aa-tRNA-synt_IIb"/>
</dbReference>
<dbReference type="InterPro" id="IPR006195">
    <property type="entry name" value="aa-tRNA-synth_II"/>
</dbReference>
<dbReference type="InterPro" id="IPR045864">
    <property type="entry name" value="aa-tRNA-synth_II/BPL/LPL"/>
</dbReference>
<dbReference type="InterPro" id="IPR004154">
    <property type="entry name" value="Anticodon-bd"/>
</dbReference>
<dbReference type="InterPro" id="IPR036621">
    <property type="entry name" value="Anticodon-bd_dom_sf"/>
</dbReference>
<dbReference type="InterPro" id="IPR023509">
    <property type="entry name" value="DTD-like_sf"/>
</dbReference>
<dbReference type="InterPro" id="IPR002320">
    <property type="entry name" value="Thr-tRNA-ligase_IIa"/>
</dbReference>
<dbReference type="InterPro" id="IPR015011">
    <property type="entry name" value="Threonyl-tRNA_syn_edit_dom_arc"/>
</dbReference>
<dbReference type="InterPro" id="IPR047246">
    <property type="entry name" value="ThrRS_anticodon"/>
</dbReference>
<dbReference type="NCBIfam" id="NF003068">
    <property type="entry name" value="PRK03991.1"/>
    <property type="match status" value="1"/>
</dbReference>
<dbReference type="NCBIfam" id="TIGR00418">
    <property type="entry name" value="thrS"/>
    <property type="match status" value="1"/>
</dbReference>
<dbReference type="PANTHER" id="PTHR11451:SF44">
    <property type="entry name" value="THREONINE--TRNA LIGASE, CHLOROPLASTIC_MITOCHONDRIAL 2"/>
    <property type="match status" value="1"/>
</dbReference>
<dbReference type="PANTHER" id="PTHR11451">
    <property type="entry name" value="THREONINE-TRNA LIGASE"/>
    <property type="match status" value="1"/>
</dbReference>
<dbReference type="Pfam" id="PF03129">
    <property type="entry name" value="HGTP_anticodon"/>
    <property type="match status" value="1"/>
</dbReference>
<dbReference type="Pfam" id="PF00587">
    <property type="entry name" value="tRNA-synt_2b"/>
    <property type="match status" value="1"/>
</dbReference>
<dbReference type="Pfam" id="PF08915">
    <property type="entry name" value="tRNA-Thr_ED"/>
    <property type="match status" value="1"/>
</dbReference>
<dbReference type="PRINTS" id="PR01047">
    <property type="entry name" value="TRNASYNTHTHR"/>
</dbReference>
<dbReference type="SUPFAM" id="SSF52954">
    <property type="entry name" value="Class II aaRS ABD-related"/>
    <property type="match status" value="1"/>
</dbReference>
<dbReference type="SUPFAM" id="SSF55681">
    <property type="entry name" value="Class II aaRS and biotin synthetases"/>
    <property type="match status" value="1"/>
</dbReference>
<dbReference type="PROSITE" id="PS50862">
    <property type="entry name" value="AA_TRNA_LIGASE_II"/>
    <property type="match status" value="1"/>
</dbReference>
<evidence type="ECO:0000255" key="1">
    <source>
        <dbReference type="HAMAP-Rule" id="MF_00184"/>
    </source>
</evidence>
<gene>
    <name evidence="1" type="primary">thrS</name>
    <name type="ordered locus">MmarC7_1413</name>
</gene>
<reference key="1">
    <citation type="submission" date="2007-06" db="EMBL/GenBank/DDBJ databases">
        <title>Complete sequence of Methanococcus maripaludis C7.</title>
        <authorList>
            <consortium name="US DOE Joint Genome Institute"/>
            <person name="Copeland A."/>
            <person name="Lucas S."/>
            <person name="Lapidus A."/>
            <person name="Barry K."/>
            <person name="Glavina del Rio T."/>
            <person name="Dalin E."/>
            <person name="Tice H."/>
            <person name="Pitluck S."/>
            <person name="Clum A."/>
            <person name="Schmutz J."/>
            <person name="Larimer F."/>
            <person name="Land M."/>
            <person name="Hauser L."/>
            <person name="Kyrpides N."/>
            <person name="Anderson I."/>
            <person name="Sieprawska-Lupa M."/>
            <person name="Whitman W.B."/>
            <person name="Richardson P."/>
        </authorList>
    </citation>
    <scope>NUCLEOTIDE SEQUENCE [LARGE SCALE GENOMIC DNA]</scope>
    <source>
        <strain>C7 / ATCC BAA-1331</strain>
    </source>
</reference>